<gene>
    <name type="primary">ptr2</name>
    <name type="ORF">SPBC13A2.04c</name>
</gene>
<proteinExistence type="evidence at protein level"/>
<protein>
    <recommendedName>
        <fullName>Probable peptide transporter ptr2</fullName>
    </recommendedName>
    <alternativeName>
        <fullName>Peptide permease ptr2</fullName>
    </alternativeName>
</protein>
<organism>
    <name type="scientific">Schizosaccharomyces pombe (strain 972 / ATCC 24843)</name>
    <name type="common">Fission yeast</name>
    <dbReference type="NCBI Taxonomy" id="284812"/>
    <lineage>
        <taxon>Eukaryota</taxon>
        <taxon>Fungi</taxon>
        <taxon>Dikarya</taxon>
        <taxon>Ascomycota</taxon>
        <taxon>Taphrinomycotina</taxon>
        <taxon>Schizosaccharomycetes</taxon>
        <taxon>Schizosaccharomycetales</taxon>
        <taxon>Schizosaccharomycetaceae</taxon>
        <taxon>Schizosaccharomyces</taxon>
    </lineage>
</organism>
<comment type="function">
    <text evidence="1">Uptake of small peptides.</text>
</comment>
<comment type="subcellular location">
    <subcellularLocation>
        <location evidence="6">Membrane</location>
        <topology evidence="6">Multi-pass membrane protein</topology>
    </subcellularLocation>
</comment>
<comment type="similarity">
    <text evidence="5">Belongs to the major facilitator superfamily. Proton-dependent oligopeptide transporter (POT/PTR) (TC 2.A.17) family.</text>
</comment>
<comment type="caution">
    <text evidence="7">Was originally (PubMed:7919993) reported to be isolated from an A.thaliana cv. Landsberg erecta cDNA library.</text>
</comment>
<comment type="sequence caution" evidence="5">
    <conflict type="frameshift">
        <sequence resource="EMBL-CDS" id="AAA53173"/>
    </conflict>
</comment>
<feature type="chain" id="PRO_0000064319" description="Probable peptide transporter ptr2">
    <location>
        <begin position="1"/>
        <end position="618"/>
    </location>
</feature>
<feature type="transmembrane region" description="Helical" evidence="2">
    <location>
        <begin position="131"/>
        <end position="151"/>
    </location>
</feature>
<feature type="transmembrane region" description="Helical" evidence="2">
    <location>
        <begin position="161"/>
        <end position="181"/>
    </location>
</feature>
<feature type="transmembrane region" description="Helical" evidence="2">
    <location>
        <begin position="187"/>
        <end position="207"/>
    </location>
</feature>
<feature type="transmembrane region" description="Helical" evidence="2">
    <location>
        <begin position="247"/>
        <end position="267"/>
    </location>
</feature>
<feature type="transmembrane region" description="Helical" evidence="2">
    <location>
        <begin position="273"/>
        <end position="293"/>
    </location>
</feature>
<feature type="transmembrane region" description="Helical" evidence="2">
    <location>
        <begin position="400"/>
        <end position="420"/>
    </location>
</feature>
<feature type="transmembrane region" description="Helical" evidence="2">
    <location>
        <begin position="430"/>
        <end position="450"/>
    </location>
</feature>
<feature type="transmembrane region" description="Helical" evidence="2">
    <location>
        <begin position="475"/>
        <end position="495"/>
    </location>
</feature>
<feature type="transmembrane region" description="Helical" evidence="2">
    <location>
        <begin position="510"/>
        <end position="530"/>
    </location>
</feature>
<feature type="transmembrane region" description="Helical" evidence="2">
    <location>
        <begin position="541"/>
        <end position="561"/>
    </location>
</feature>
<feature type="region of interest" description="Disordered" evidence="3">
    <location>
        <begin position="26"/>
        <end position="50"/>
    </location>
</feature>
<feature type="compositionally biased region" description="Polar residues" evidence="3">
    <location>
        <begin position="34"/>
        <end position="50"/>
    </location>
</feature>
<feature type="modified residue" description="Phosphoserine" evidence="4">
    <location>
        <position position="22"/>
    </location>
</feature>
<feature type="modified residue" description="Phosphotyrosine" evidence="4">
    <location>
        <position position="23"/>
    </location>
</feature>
<feature type="modified residue" description="Phosphoserine" evidence="4">
    <location>
        <position position="25"/>
    </location>
</feature>
<feature type="modified residue" description="Phosphoserine" evidence="4">
    <location>
        <position position="33"/>
    </location>
</feature>
<feature type="modified residue" description="Phosphothreonine" evidence="4">
    <location>
        <position position="35"/>
    </location>
</feature>
<feature type="modified residue" description="Phosphoserine" evidence="4">
    <location>
        <position position="44"/>
    </location>
</feature>
<feature type="modified residue" description="Phosphothreonine" evidence="4">
    <location>
        <position position="45"/>
    </location>
</feature>
<feature type="modified residue" description="Phosphoserine" evidence="4">
    <location>
        <position position="51"/>
    </location>
</feature>
<feature type="modified residue" description="Phosphoserine" evidence="4">
    <location>
        <position position="53"/>
    </location>
</feature>
<feature type="modified residue" description="Phosphothreonine" evidence="4">
    <location>
        <position position="54"/>
    </location>
</feature>
<feature type="modified residue" description="Phosphoserine" evidence="4">
    <location>
        <position position="594"/>
    </location>
</feature>
<feature type="modified residue" description="Phosphothreonine" evidence="4">
    <location>
        <position position="618"/>
    </location>
</feature>
<feature type="sequence conflict" description="In Ref. 1; AAA53173." evidence="5" ref="1">
    <original>T</original>
    <variation>Q</variation>
    <location>
        <position position="38"/>
    </location>
</feature>
<feature type="sequence conflict" description="In Ref. 1; AAA53173." evidence="5" ref="1">
    <original>R</original>
    <variation>S</variation>
    <location>
        <position position="76"/>
    </location>
</feature>
<feature type="sequence conflict" description="In Ref. 1; AAA53173." evidence="5" ref="1">
    <original>S</original>
    <variation>T</variation>
    <location>
        <position position="127"/>
    </location>
</feature>
<feature type="sequence conflict" description="In Ref. 1; AAA53173." evidence="5" ref="1">
    <original>S</original>
    <variation>T</variation>
    <location>
        <position position="253"/>
    </location>
</feature>
<feature type="sequence conflict" description="In Ref. 1." evidence="5" ref="1">
    <original>TA</original>
    <variation>NC</variation>
    <location>
        <begin position="609"/>
        <end position="610"/>
    </location>
</feature>
<reference key="1">
    <citation type="journal article" date="1994" name="Plant Cell">
        <title>An Arabidopsis peptide transporter is a member of a new class of membrane transport proteins.</title>
        <authorList>
            <person name="Steiner H."/>
            <person name="Song W."/>
            <person name="Naider F."/>
            <person name="Becker J.M."/>
            <person name="Stacey G."/>
        </authorList>
    </citation>
    <scope>NUCLEOTIDE SEQUENCE [MRNA]</scope>
</reference>
<reference key="2">
    <citation type="journal article" date="2002" name="Nature">
        <title>The genome sequence of Schizosaccharomyces pombe.</title>
        <authorList>
            <person name="Wood V."/>
            <person name="Gwilliam R."/>
            <person name="Rajandream M.A."/>
            <person name="Lyne M.H."/>
            <person name="Lyne R."/>
            <person name="Stewart A."/>
            <person name="Sgouros J.G."/>
            <person name="Peat N."/>
            <person name="Hayles J."/>
            <person name="Baker S.G."/>
            <person name="Basham D."/>
            <person name="Bowman S."/>
            <person name="Brooks K."/>
            <person name="Brown D."/>
            <person name="Brown S."/>
            <person name="Chillingworth T."/>
            <person name="Churcher C.M."/>
            <person name="Collins M."/>
            <person name="Connor R."/>
            <person name="Cronin A."/>
            <person name="Davis P."/>
            <person name="Feltwell T."/>
            <person name="Fraser A."/>
            <person name="Gentles S."/>
            <person name="Goble A."/>
            <person name="Hamlin N."/>
            <person name="Harris D.E."/>
            <person name="Hidalgo J."/>
            <person name="Hodgson G."/>
            <person name="Holroyd S."/>
            <person name="Hornsby T."/>
            <person name="Howarth S."/>
            <person name="Huckle E.J."/>
            <person name="Hunt S."/>
            <person name="Jagels K."/>
            <person name="James K.D."/>
            <person name="Jones L."/>
            <person name="Jones M."/>
            <person name="Leather S."/>
            <person name="McDonald S."/>
            <person name="McLean J."/>
            <person name="Mooney P."/>
            <person name="Moule S."/>
            <person name="Mungall K.L."/>
            <person name="Murphy L.D."/>
            <person name="Niblett D."/>
            <person name="Odell C."/>
            <person name="Oliver K."/>
            <person name="O'Neil S."/>
            <person name="Pearson D."/>
            <person name="Quail M.A."/>
            <person name="Rabbinowitsch E."/>
            <person name="Rutherford K.M."/>
            <person name="Rutter S."/>
            <person name="Saunders D."/>
            <person name="Seeger K."/>
            <person name="Sharp S."/>
            <person name="Skelton J."/>
            <person name="Simmonds M.N."/>
            <person name="Squares R."/>
            <person name="Squares S."/>
            <person name="Stevens K."/>
            <person name="Taylor K."/>
            <person name="Taylor R.G."/>
            <person name="Tivey A."/>
            <person name="Walsh S.V."/>
            <person name="Warren T."/>
            <person name="Whitehead S."/>
            <person name="Woodward J.R."/>
            <person name="Volckaert G."/>
            <person name="Aert R."/>
            <person name="Robben J."/>
            <person name="Grymonprez B."/>
            <person name="Weltjens I."/>
            <person name="Vanstreels E."/>
            <person name="Rieger M."/>
            <person name="Schaefer M."/>
            <person name="Mueller-Auer S."/>
            <person name="Gabel C."/>
            <person name="Fuchs M."/>
            <person name="Duesterhoeft A."/>
            <person name="Fritzc C."/>
            <person name="Holzer E."/>
            <person name="Moestl D."/>
            <person name="Hilbert H."/>
            <person name="Borzym K."/>
            <person name="Langer I."/>
            <person name="Beck A."/>
            <person name="Lehrach H."/>
            <person name="Reinhardt R."/>
            <person name="Pohl T.M."/>
            <person name="Eger P."/>
            <person name="Zimmermann W."/>
            <person name="Wedler H."/>
            <person name="Wambutt R."/>
            <person name="Purnelle B."/>
            <person name="Goffeau A."/>
            <person name="Cadieu E."/>
            <person name="Dreano S."/>
            <person name="Gloux S."/>
            <person name="Lelaure V."/>
            <person name="Mottier S."/>
            <person name="Galibert F."/>
            <person name="Aves S.J."/>
            <person name="Xiang Z."/>
            <person name="Hunt C."/>
            <person name="Moore K."/>
            <person name="Hurst S.M."/>
            <person name="Lucas M."/>
            <person name="Rochet M."/>
            <person name="Gaillardin C."/>
            <person name="Tallada V.A."/>
            <person name="Garzon A."/>
            <person name="Thode G."/>
            <person name="Daga R.R."/>
            <person name="Cruzado L."/>
            <person name="Jimenez J."/>
            <person name="Sanchez M."/>
            <person name="del Rey F."/>
            <person name="Benito J."/>
            <person name="Dominguez A."/>
            <person name="Revuelta J.L."/>
            <person name="Moreno S."/>
            <person name="Armstrong J."/>
            <person name="Forsburg S.L."/>
            <person name="Cerutti L."/>
            <person name="Lowe T."/>
            <person name="McCombie W.R."/>
            <person name="Paulsen I."/>
            <person name="Potashkin J."/>
            <person name="Shpakovski G.V."/>
            <person name="Ussery D."/>
            <person name="Barrell B.G."/>
            <person name="Nurse P."/>
        </authorList>
    </citation>
    <scope>NUCLEOTIDE SEQUENCE [LARGE SCALE GENOMIC DNA]</scope>
    <source>
        <strain>972 / ATCC 24843</strain>
    </source>
</reference>
<reference key="3">
    <citation type="journal article" date="2000" name="Genes Cells">
        <title>Large-scale screening of intracellular protein localization in living fission yeast cells by the use of a GFP-fusion genomic DNA library.</title>
        <authorList>
            <person name="Ding D.-Q."/>
            <person name="Tomita Y."/>
            <person name="Yamamoto A."/>
            <person name="Chikashige Y."/>
            <person name="Haraguchi T."/>
            <person name="Hiraoka Y."/>
        </authorList>
    </citation>
    <scope>NUCLEOTIDE SEQUENCE [LARGE SCALE GENOMIC DNA] OF 215-395</scope>
    <scope>SUBCELLULAR LOCATION</scope>
    <source>
        <strain>ATCC 38364 / 968</strain>
    </source>
</reference>
<reference key="4">
    <citation type="journal article" date="2008" name="J. Proteome Res.">
        <title>Phosphoproteome analysis of fission yeast.</title>
        <authorList>
            <person name="Wilson-Grady J.T."/>
            <person name="Villen J."/>
            <person name="Gygi S.P."/>
        </authorList>
    </citation>
    <scope>PHOSPHORYLATION [LARGE SCALE ANALYSIS] AT SER-22; TYR-23; SER-25; SER-33; THR-35; SER-44; THR-45; SER-51; SER-53; THR-54; SER-594 AND THR-618</scope>
    <scope>IDENTIFICATION BY MASS SPECTROMETRY</scope>
</reference>
<accession>Q9P380</accession>
<accession>P46031</accession>
<accession>Q9UU13</accession>
<dbReference type="EMBL" id="U01171">
    <property type="protein sequence ID" value="AAA53173.1"/>
    <property type="status" value="ALT_FRAME"/>
    <property type="molecule type" value="mRNA"/>
</dbReference>
<dbReference type="EMBL" id="CU329671">
    <property type="protein sequence ID" value="CAB99397.1"/>
    <property type="molecule type" value="Genomic_DNA"/>
</dbReference>
<dbReference type="EMBL" id="AB027874">
    <property type="protein sequence ID" value="BAA87178.1"/>
    <property type="molecule type" value="Genomic_DNA"/>
</dbReference>
<dbReference type="RefSeq" id="NP_596417.1">
    <property type="nucleotide sequence ID" value="NM_001022336.2"/>
</dbReference>
<dbReference type="SMR" id="Q9P380"/>
<dbReference type="BioGRID" id="276734">
    <property type="interactions" value="111"/>
</dbReference>
<dbReference type="FunCoup" id="Q9P380">
    <property type="interactions" value="332"/>
</dbReference>
<dbReference type="STRING" id="284812.Q9P380"/>
<dbReference type="TCDB" id="2.A.17.2.1">
    <property type="family name" value="the proton-dependent oligopeptide transporter (pot/ptr) family"/>
</dbReference>
<dbReference type="iPTMnet" id="Q9P380"/>
<dbReference type="PaxDb" id="4896-SPBC13A2.04c.1"/>
<dbReference type="EnsemblFungi" id="SPBC13A2.04c.1">
    <property type="protein sequence ID" value="SPBC13A2.04c.1:pep"/>
    <property type="gene ID" value="SPBC13A2.04c"/>
</dbReference>
<dbReference type="GeneID" id="2540201"/>
<dbReference type="KEGG" id="spo:2540201"/>
<dbReference type="PomBase" id="SPBC13A2.04c">
    <property type="gene designation" value="ptr2"/>
</dbReference>
<dbReference type="VEuPathDB" id="FungiDB:SPBC13A2.04c"/>
<dbReference type="eggNOG" id="KOG1237">
    <property type="taxonomic scope" value="Eukaryota"/>
</dbReference>
<dbReference type="HOGENOM" id="CLU_004790_4_2_1"/>
<dbReference type="InParanoid" id="Q9P380"/>
<dbReference type="OMA" id="LVLHIIV"/>
<dbReference type="PhylomeDB" id="Q9P380"/>
<dbReference type="Reactome" id="R-SPO-427975">
    <property type="pathway name" value="Proton/oligopeptide cotransporters"/>
</dbReference>
<dbReference type="Reactome" id="R-SPO-6798695">
    <property type="pathway name" value="Neutrophil degranulation"/>
</dbReference>
<dbReference type="SABIO-RK" id="Q9P380"/>
<dbReference type="PRO" id="PR:Q9P380"/>
<dbReference type="Proteomes" id="UP000002485">
    <property type="component" value="Chromosome II"/>
</dbReference>
<dbReference type="GO" id="GO:0032153">
    <property type="term" value="C:cell division site"/>
    <property type="evidence" value="ECO:0000314"/>
    <property type="project" value="PomBase"/>
</dbReference>
<dbReference type="GO" id="GO:0000324">
    <property type="term" value="C:fungal-type vacuole"/>
    <property type="evidence" value="ECO:0007005"/>
    <property type="project" value="PomBase"/>
</dbReference>
<dbReference type="GO" id="GO:0005886">
    <property type="term" value="C:plasma membrane"/>
    <property type="evidence" value="ECO:0000318"/>
    <property type="project" value="GO_Central"/>
</dbReference>
<dbReference type="GO" id="GO:0031520">
    <property type="term" value="C:plasma membrane of cell tip"/>
    <property type="evidence" value="ECO:0000314"/>
    <property type="project" value="PomBase"/>
</dbReference>
<dbReference type="GO" id="GO:0005774">
    <property type="term" value="C:vacuolar membrane"/>
    <property type="evidence" value="ECO:0000269"/>
    <property type="project" value="PomBase"/>
</dbReference>
<dbReference type="GO" id="GO:0071916">
    <property type="term" value="F:dipeptide transmembrane transporter activity"/>
    <property type="evidence" value="ECO:0000315"/>
    <property type="project" value="PomBase"/>
</dbReference>
<dbReference type="GO" id="GO:0042937">
    <property type="term" value="F:tripeptide transmembrane transporter activity"/>
    <property type="evidence" value="ECO:0000318"/>
    <property type="project" value="GO_Central"/>
</dbReference>
<dbReference type="GO" id="GO:0140206">
    <property type="term" value="P:dipeptide import across plasma membrane"/>
    <property type="evidence" value="ECO:0000315"/>
    <property type="project" value="PomBase"/>
</dbReference>
<dbReference type="GO" id="GO:1904262">
    <property type="term" value="P:negative regulation of TORC1 signaling"/>
    <property type="evidence" value="ECO:0000269"/>
    <property type="project" value="PomBase"/>
</dbReference>
<dbReference type="GO" id="GO:0015031">
    <property type="term" value="P:protein transport"/>
    <property type="evidence" value="ECO:0007669"/>
    <property type="project" value="UniProtKB-KW"/>
</dbReference>
<dbReference type="GO" id="GO:0140207">
    <property type="term" value="P:tripeptide import across plasma membrane"/>
    <property type="evidence" value="ECO:0000266"/>
    <property type="project" value="PomBase"/>
</dbReference>
<dbReference type="CDD" id="cd17350">
    <property type="entry name" value="MFS_PTR2"/>
    <property type="match status" value="1"/>
</dbReference>
<dbReference type="FunFam" id="1.20.1250.20:FF:000085">
    <property type="entry name" value="MFS peptide transporter Ptr2"/>
    <property type="match status" value="1"/>
</dbReference>
<dbReference type="Gene3D" id="1.20.1250.20">
    <property type="entry name" value="MFS general substrate transporter like domains"/>
    <property type="match status" value="1"/>
</dbReference>
<dbReference type="InterPro" id="IPR036259">
    <property type="entry name" value="MFS_trans_sf"/>
</dbReference>
<dbReference type="InterPro" id="IPR000109">
    <property type="entry name" value="POT_fam"/>
</dbReference>
<dbReference type="InterPro" id="IPR018456">
    <property type="entry name" value="PTR2_symporter_CS"/>
</dbReference>
<dbReference type="PANTHER" id="PTHR11654">
    <property type="entry name" value="OLIGOPEPTIDE TRANSPORTER-RELATED"/>
    <property type="match status" value="1"/>
</dbReference>
<dbReference type="Pfam" id="PF00854">
    <property type="entry name" value="PTR2"/>
    <property type="match status" value="1"/>
</dbReference>
<dbReference type="SUPFAM" id="SSF103473">
    <property type="entry name" value="MFS general substrate transporter"/>
    <property type="match status" value="1"/>
</dbReference>
<dbReference type="PROSITE" id="PS01022">
    <property type="entry name" value="PTR2_1"/>
    <property type="match status" value="1"/>
</dbReference>
<dbReference type="PROSITE" id="PS01023">
    <property type="entry name" value="PTR2_2"/>
    <property type="match status" value="1"/>
</dbReference>
<keyword id="KW-0472">Membrane</keyword>
<keyword id="KW-0571">Peptide transport</keyword>
<keyword id="KW-0597">Phosphoprotein</keyword>
<keyword id="KW-0653">Protein transport</keyword>
<keyword id="KW-1185">Reference proteome</keyword>
<keyword id="KW-0812">Transmembrane</keyword>
<keyword id="KW-1133">Transmembrane helix</keyword>
<keyword id="KW-0813">Transport</keyword>
<name>PTR2_SCHPO</name>
<sequence length="618" mass="68499">MSSIEEQITKSDSDFIISEDQSYLSKEKKADGSATINTADEQSSTDELQKSMSTGVLVNGDLYPSPTEEELATLPRVCGTIPWKAFIIIIVELCERFAYYGLTVPFQNYMQFGPKDATPGALNLGESGADGLSNFFTFWCYVTPVGAALIADQFLGRYNTIVCSAVIYFIGILILTCTAIPSVIDAGKSMGGFVVSLIIIGLGTGGIKSNVSPLMAEQLPKIPPYVKTKKNGSKVIVDPVVTTSRAYMIFYWSINVGSLSVLATTSLESTKGFVYAYLLPLCVFVIPLIILAVSKRFYKHTPPSGSIFVRVGQVFFLAAQNKFNLEKTKPSCTTTVGRVTLKDQWDDLFIDELKRALRACKTFLFYPIYWVCYGQMTNNLISQAGQMQTGNVSNDLFQAFDSIALIIFIPICDNIIYPLLRKYNIPFKPILRITLGFMFATASMIYAAVLQAKIYQRGPCYANFTDTCVSNDISVWIQIPAYVLIAFSEIFASITGLEFAFTKAPPSMKSIITALFLFTNAFGAILSICISSTAVNPKLTWMYTGIAVTAFIAGIMFWVCFHHYDAMEDEQNQLEFKRNDALTKKDVEKEVHDSYSMADESQYNLEKATAEEEIMKST</sequence>
<evidence type="ECO:0000250" key="1"/>
<evidence type="ECO:0000255" key="2"/>
<evidence type="ECO:0000256" key="3">
    <source>
        <dbReference type="SAM" id="MobiDB-lite"/>
    </source>
</evidence>
<evidence type="ECO:0000269" key="4">
    <source>
    </source>
</evidence>
<evidence type="ECO:0000305" key="5"/>
<evidence type="ECO:0000305" key="6">
    <source>
    </source>
</evidence>
<evidence type="ECO:0000305" key="7">
    <source>
    </source>
</evidence>